<keyword id="KW-0456">Lyase</keyword>
<keyword id="KW-0472">Membrane</keyword>
<keyword id="KW-0479">Metal-binding</keyword>
<keyword id="KW-0496">Mitochondrion</keyword>
<keyword id="KW-0999">Mitochondrion inner membrane</keyword>
<keyword id="KW-0597">Phosphoprotein</keyword>
<keyword id="KW-1185">Reference proteome</keyword>
<keyword id="KW-0809">Transit peptide</keyword>
<keyword id="KW-0831">Ubiquinone biosynthesis</keyword>
<keyword id="KW-0862">Zinc</keyword>
<reference key="1">
    <citation type="journal article" date="2005" name="Science">
        <title>The transcriptional landscape of the mammalian genome.</title>
        <authorList>
            <person name="Carninci P."/>
            <person name="Kasukawa T."/>
            <person name="Katayama S."/>
            <person name="Gough J."/>
            <person name="Frith M.C."/>
            <person name="Maeda N."/>
            <person name="Oyama R."/>
            <person name="Ravasi T."/>
            <person name="Lenhard B."/>
            <person name="Wells C."/>
            <person name="Kodzius R."/>
            <person name="Shimokawa K."/>
            <person name="Bajic V.B."/>
            <person name="Brenner S.E."/>
            <person name="Batalov S."/>
            <person name="Forrest A.R."/>
            <person name="Zavolan M."/>
            <person name="Davis M.J."/>
            <person name="Wilming L.G."/>
            <person name="Aidinis V."/>
            <person name="Allen J.E."/>
            <person name="Ambesi-Impiombato A."/>
            <person name="Apweiler R."/>
            <person name="Aturaliya R.N."/>
            <person name="Bailey T.L."/>
            <person name="Bansal M."/>
            <person name="Baxter L."/>
            <person name="Beisel K.W."/>
            <person name="Bersano T."/>
            <person name="Bono H."/>
            <person name="Chalk A.M."/>
            <person name="Chiu K.P."/>
            <person name="Choudhary V."/>
            <person name="Christoffels A."/>
            <person name="Clutterbuck D.R."/>
            <person name="Crowe M.L."/>
            <person name="Dalla E."/>
            <person name="Dalrymple B.P."/>
            <person name="de Bono B."/>
            <person name="Della Gatta G."/>
            <person name="di Bernardo D."/>
            <person name="Down T."/>
            <person name="Engstrom P."/>
            <person name="Fagiolini M."/>
            <person name="Faulkner G."/>
            <person name="Fletcher C.F."/>
            <person name="Fukushima T."/>
            <person name="Furuno M."/>
            <person name="Futaki S."/>
            <person name="Gariboldi M."/>
            <person name="Georgii-Hemming P."/>
            <person name="Gingeras T.R."/>
            <person name="Gojobori T."/>
            <person name="Green R.E."/>
            <person name="Gustincich S."/>
            <person name="Harbers M."/>
            <person name="Hayashi Y."/>
            <person name="Hensch T.K."/>
            <person name="Hirokawa N."/>
            <person name="Hill D."/>
            <person name="Huminiecki L."/>
            <person name="Iacono M."/>
            <person name="Ikeo K."/>
            <person name="Iwama A."/>
            <person name="Ishikawa T."/>
            <person name="Jakt M."/>
            <person name="Kanapin A."/>
            <person name="Katoh M."/>
            <person name="Kawasawa Y."/>
            <person name="Kelso J."/>
            <person name="Kitamura H."/>
            <person name="Kitano H."/>
            <person name="Kollias G."/>
            <person name="Krishnan S.P."/>
            <person name="Kruger A."/>
            <person name="Kummerfeld S.K."/>
            <person name="Kurochkin I.V."/>
            <person name="Lareau L.F."/>
            <person name="Lazarevic D."/>
            <person name="Lipovich L."/>
            <person name="Liu J."/>
            <person name="Liuni S."/>
            <person name="McWilliam S."/>
            <person name="Madan Babu M."/>
            <person name="Madera M."/>
            <person name="Marchionni L."/>
            <person name="Matsuda H."/>
            <person name="Matsuzawa S."/>
            <person name="Miki H."/>
            <person name="Mignone F."/>
            <person name="Miyake S."/>
            <person name="Morris K."/>
            <person name="Mottagui-Tabar S."/>
            <person name="Mulder N."/>
            <person name="Nakano N."/>
            <person name="Nakauchi H."/>
            <person name="Ng P."/>
            <person name="Nilsson R."/>
            <person name="Nishiguchi S."/>
            <person name="Nishikawa S."/>
            <person name="Nori F."/>
            <person name="Ohara O."/>
            <person name="Okazaki Y."/>
            <person name="Orlando V."/>
            <person name="Pang K.C."/>
            <person name="Pavan W.J."/>
            <person name="Pavesi G."/>
            <person name="Pesole G."/>
            <person name="Petrovsky N."/>
            <person name="Piazza S."/>
            <person name="Reed J."/>
            <person name="Reid J.F."/>
            <person name="Ring B.Z."/>
            <person name="Ringwald M."/>
            <person name="Rost B."/>
            <person name="Ruan Y."/>
            <person name="Salzberg S.L."/>
            <person name="Sandelin A."/>
            <person name="Schneider C."/>
            <person name="Schoenbach C."/>
            <person name="Sekiguchi K."/>
            <person name="Semple C.A."/>
            <person name="Seno S."/>
            <person name="Sessa L."/>
            <person name="Sheng Y."/>
            <person name="Shibata Y."/>
            <person name="Shimada H."/>
            <person name="Shimada K."/>
            <person name="Silva D."/>
            <person name="Sinclair B."/>
            <person name="Sperling S."/>
            <person name="Stupka E."/>
            <person name="Sugiura K."/>
            <person name="Sultana R."/>
            <person name="Takenaka Y."/>
            <person name="Taki K."/>
            <person name="Tammoja K."/>
            <person name="Tan S.L."/>
            <person name="Tang S."/>
            <person name="Taylor M.S."/>
            <person name="Tegner J."/>
            <person name="Teichmann S.A."/>
            <person name="Ueda H.R."/>
            <person name="van Nimwegen E."/>
            <person name="Verardo R."/>
            <person name="Wei C.L."/>
            <person name="Yagi K."/>
            <person name="Yamanishi H."/>
            <person name="Zabarovsky E."/>
            <person name="Zhu S."/>
            <person name="Zimmer A."/>
            <person name="Hide W."/>
            <person name="Bult C."/>
            <person name="Grimmond S.M."/>
            <person name="Teasdale R.D."/>
            <person name="Liu E.T."/>
            <person name="Brusic V."/>
            <person name="Quackenbush J."/>
            <person name="Wahlestedt C."/>
            <person name="Mattick J.S."/>
            <person name="Hume D.A."/>
            <person name="Kai C."/>
            <person name="Sasaki D."/>
            <person name="Tomaru Y."/>
            <person name="Fukuda S."/>
            <person name="Kanamori-Katayama M."/>
            <person name="Suzuki M."/>
            <person name="Aoki J."/>
            <person name="Arakawa T."/>
            <person name="Iida J."/>
            <person name="Imamura K."/>
            <person name="Itoh M."/>
            <person name="Kato T."/>
            <person name="Kawaji H."/>
            <person name="Kawagashira N."/>
            <person name="Kawashima T."/>
            <person name="Kojima M."/>
            <person name="Kondo S."/>
            <person name="Konno H."/>
            <person name="Nakano K."/>
            <person name="Ninomiya N."/>
            <person name="Nishio T."/>
            <person name="Okada M."/>
            <person name="Plessy C."/>
            <person name="Shibata K."/>
            <person name="Shiraki T."/>
            <person name="Suzuki S."/>
            <person name="Tagami M."/>
            <person name="Waki K."/>
            <person name="Watahiki A."/>
            <person name="Okamura-Oho Y."/>
            <person name="Suzuki H."/>
            <person name="Kawai J."/>
            <person name="Hayashizaki Y."/>
        </authorList>
    </citation>
    <scope>NUCLEOTIDE SEQUENCE [LARGE SCALE MRNA]</scope>
    <source>
        <strain>C57BL/6J</strain>
        <tissue>Liver</tissue>
        <tissue>Spinal cord</tissue>
    </source>
</reference>
<reference key="2">
    <citation type="journal article" date="2009" name="PLoS Biol.">
        <title>Lineage-specific biology revealed by a finished genome assembly of the mouse.</title>
        <authorList>
            <person name="Church D.M."/>
            <person name="Goodstadt L."/>
            <person name="Hillier L.W."/>
            <person name="Zody M.C."/>
            <person name="Goldstein S."/>
            <person name="She X."/>
            <person name="Bult C.J."/>
            <person name="Agarwala R."/>
            <person name="Cherry J.L."/>
            <person name="DiCuccio M."/>
            <person name="Hlavina W."/>
            <person name="Kapustin Y."/>
            <person name="Meric P."/>
            <person name="Maglott D."/>
            <person name="Birtle Z."/>
            <person name="Marques A.C."/>
            <person name="Graves T."/>
            <person name="Zhou S."/>
            <person name="Teague B."/>
            <person name="Potamousis K."/>
            <person name="Churas C."/>
            <person name="Place M."/>
            <person name="Herschleb J."/>
            <person name="Runnheim R."/>
            <person name="Forrest D."/>
            <person name="Amos-Landgraf J."/>
            <person name="Schwartz D.C."/>
            <person name="Cheng Z."/>
            <person name="Lindblad-Toh K."/>
            <person name="Eichler E.E."/>
            <person name="Ponting C.P."/>
        </authorList>
    </citation>
    <scope>NUCLEOTIDE SEQUENCE [LARGE SCALE GENOMIC DNA]</scope>
    <source>
        <strain>C57BL/6J</strain>
    </source>
</reference>
<reference key="3">
    <citation type="journal article" date="2010" name="Cell">
        <title>A tissue-specific atlas of mouse protein phosphorylation and expression.</title>
        <authorList>
            <person name="Huttlin E.L."/>
            <person name="Jedrychowski M.P."/>
            <person name="Elias J.E."/>
            <person name="Goswami T."/>
            <person name="Rad R."/>
            <person name="Beausoleil S.A."/>
            <person name="Villen J."/>
            <person name="Haas W."/>
            <person name="Sowa M.E."/>
            <person name="Gygi S.P."/>
        </authorList>
    </citation>
    <scope>IDENTIFICATION BY MASS SPECTROMETRY [LARGE SCALE ANALYSIS]</scope>
    <source>
        <tissue>Brain</tissue>
        <tissue>Brown adipose tissue</tissue>
        <tissue>Heart</tissue>
        <tissue>Kidney</tissue>
        <tissue>Liver</tissue>
    </source>
</reference>
<sequence>MATLLLLRSLRLHRSLRPRTRPAVDVPLRAGSHGARLLYPDHIPTTPLQKMLLAAGAAGMALYNPYRHDMVAVLGETTGCHTLKFLRDQMKKDPEGAQILQERPRISLSTLDLSKLQSLPEGSLGREYLRFLDVNKVSPDTRAPTRFVDDEELAYVIQRYREVHDMLHTLLGMPTNMLGEVVVKWFEAVQTGLPMCILGALFGPIRLRTQSLQVLFSELIPWAIQNGRRAPCVLNIYYEQRWEQPLTALREELGISPPPKHIQGLA</sequence>
<gene>
    <name type="primary">Coq4</name>
</gene>
<name>COQ4_MOUSE</name>
<accession>Q8BGB8</accession>
<proteinExistence type="evidence at protein level"/>
<evidence type="ECO:0000250" key="1">
    <source>
        <dbReference type="UniProtKB" id="Q9Y3A0"/>
    </source>
</evidence>
<evidence type="ECO:0000255" key="2">
    <source>
        <dbReference type="HAMAP-Rule" id="MF_03111"/>
    </source>
</evidence>
<protein>
    <recommendedName>
        <fullName evidence="2">Ubiquinone biosynthesis protein COQ4 homolog, mitochondrial</fullName>
    </recommendedName>
    <alternativeName>
        <fullName>4-hydroxy-3-methoxy-5-polyprenylbenzoate decarboxylase</fullName>
        <ecNumber evidence="2">4.1.1.130</ecNumber>
    </alternativeName>
    <alternativeName>
        <fullName evidence="2">Coenzyme Q biosynthesis protein 4 homolog</fullName>
    </alternativeName>
</protein>
<comment type="function">
    <text evidence="2">Lyase that catalyzes the C1-decarboxylation of 4-hydroxy-3-methoxy-5-(all-trans-decaprenyl)benzoic acid into 2-methoxy-6-(all-trans-decaprenyl)phenol during ubiquinone biosynthesis.</text>
</comment>
<comment type="catalytic activity">
    <reaction evidence="2">
        <text>4-hydroxy-3-methoxy-5-(all-trans-decaprenyl)benzoate + H(+) = 2-methoxy-6-(all-trans-decaprenyl)phenol + CO2</text>
        <dbReference type="Rhea" id="RHEA:81275"/>
        <dbReference type="ChEBI" id="CHEBI:15378"/>
        <dbReference type="ChEBI" id="CHEBI:16526"/>
        <dbReference type="ChEBI" id="CHEBI:50774"/>
        <dbReference type="ChEBI" id="CHEBI:62796"/>
        <dbReference type="EC" id="4.1.1.130"/>
    </reaction>
</comment>
<comment type="cofactor">
    <cofactor evidence="2">
        <name>Zn(2+)</name>
        <dbReference type="ChEBI" id="CHEBI:29105"/>
    </cofactor>
</comment>
<comment type="pathway">
    <text evidence="2">Cofactor biosynthesis; ubiquinone biosynthesis.</text>
</comment>
<comment type="subunit">
    <text evidence="2">Component of a multi-subunit COQ enzyme complex, composed of at least COQ3, COQ4, COQ5, COQ6, COQ7 and COQ9.</text>
</comment>
<comment type="subcellular location">
    <subcellularLocation>
        <location evidence="2">Mitochondrion inner membrane</location>
        <topology evidence="2">Peripheral membrane protein</topology>
        <orientation evidence="2">Matrix side</orientation>
    </subcellularLocation>
</comment>
<comment type="similarity">
    <text evidence="2">Belongs to the COQ4 family.</text>
</comment>
<feature type="transit peptide" description="Mitochondrion" evidence="2">
    <location>
        <begin position="1"/>
        <end position="30"/>
    </location>
</feature>
<feature type="chain" id="PRO_0000320291" description="Ubiquinone biosynthesis protein COQ4 homolog, mitochondrial">
    <location>
        <begin position="31"/>
        <end position="266"/>
    </location>
</feature>
<feature type="binding site" evidence="2">
    <location>
        <position position="164"/>
    </location>
    <ligand>
        <name>Zn(2+)</name>
        <dbReference type="ChEBI" id="CHEBI:29105"/>
    </ligand>
</feature>
<feature type="binding site" evidence="2">
    <location>
        <position position="165"/>
    </location>
    <ligand>
        <name>Zn(2+)</name>
        <dbReference type="ChEBI" id="CHEBI:29105"/>
    </ligand>
</feature>
<feature type="binding site" evidence="2">
    <location>
        <position position="168"/>
    </location>
    <ligand>
        <name>Zn(2+)</name>
        <dbReference type="ChEBI" id="CHEBI:29105"/>
    </ligand>
</feature>
<feature type="binding site" evidence="2">
    <location>
        <position position="180"/>
    </location>
    <ligand>
        <name>Zn(2+)</name>
        <dbReference type="ChEBI" id="CHEBI:29105"/>
    </ligand>
</feature>
<feature type="modified residue" description="Phosphoserine" evidence="1">
    <location>
        <position position="109"/>
    </location>
</feature>
<organism>
    <name type="scientific">Mus musculus</name>
    <name type="common">Mouse</name>
    <dbReference type="NCBI Taxonomy" id="10090"/>
    <lineage>
        <taxon>Eukaryota</taxon>
        <taxon>Metazoa</taxon>
        <taxon>Chordata</taxon>
        <taxon>Craniata</taxon>
        <taxon>Vertebrata</taxon>
        <taxon>Euteleostomi</taxon>
        <taxon>Mammalia</taxon>
        <taxon>Eutheria</taxon>
        <taxon>Euarchontoglires</taxon>
        <taxon>Glires</taxon>
        <taxon>Rodentia</taxon>
        <taxon>Myomorpha</taxon>
        <taxon>Muroidea</taxon>
        <taxon>Muridae</taxon>
        <taxon>Murinae</taxon>
        <taxon>Mus</taxon>
        <taxon>Mus</taxon>
    </lineage>
</organism>
<dbReference type="EC" id="4.1.1.130" evidence="2"/>
<dbReference type="EMBL" id="AK039422">
    <property type="protein sequence ID" value="BAC30344.1"/>
    <property type="molecule type" value="mRNA"/>
</dbReference>
<dbReference type="EMBL" id="AK039676">
    <property type="protein sequence ID" value="BAC30416.1"/>
    <property type="molecule type" value="mRNA"/>
</dbReference>
<dbReference type="EMBL" id="AK050459">
    <property type="protein sequence ID" value="BAC34269.1"/>
    <property type="molecule type" value="mRNA"/>
</dbReference>
<dbReference type="EMBL" id="AL845323">
    <property type="status" value="NOT_ANNOTATED_CDS"/>
    <property type="molecule type" value="Genomic_DNA"/>
</dbReference>
<dbReference type="CCDS" id="CCDS15857.1"/>
<dbReference type="RefSeq" id="NP_848808.1">
    <property type="nucleotide sequence ID" value="NM_178693.5"/>
</dbReference>
<dbReference type="SMR" id="Q8BGB8"/>
<dbReference type="BioGRID" id="230662">
    <property type="interactions" value="1"/>
</dbReference>
<dbReference type="ComplexPortal" id="CPX-3662">
    <property type="entry name" value="CoQ biosynthetic complex"/>
</dbReference>
<dbReference type="FunCoup" id="Q8BGB8">
    <property type="interactions" value="573"/>
</dbReference>
<dbReference type="STRING" id="10090.ENSMUSP00000028137"/>
<dbReference type="iPTMnet" id="Q8BGB8"/>
<dbReference type="PhosphoSitePlus" id="Q8BGB8"/>
<dbReference type="SwissPalm" id="Q8BGB8"/>
<dbReference type="PaxDb" id="10090-ENSMUSP00000028137"/>
<dbReference type="ProteomicsDB" id="283493"/>
<dbReference type="Pumba" id="Q8BGB8"/>
<dbReference type="Antibodypedia" id="31095">
    <property type="antibodies" value="49 antibodies from 13 providers"/>
</dbReference>
<dbReference type="DNASU" id="227683"/>
<dbReference type="Ensembl" id="ENSMUST00000028137.10">
    <property type="protein sequence ID" value="ENSMUSP00000028137.4"/>
    <property type="gene ID" value="ENSMUSG00000026798.11"/>
</dbReference>
<dbReference type="GeneID" id="227683"/>
<dbReference type="KEGG" id="mmu:227683"/>
<dbReference type="UCSC" id="uc008jac.1">
    <property type="organism name" value="mouse"/>
</dbReference>
<dbReference type="AGR" id="MGI:1098826"/>
<dbReference type="CTD" id="51117"/>
<dbReference type="MGI" id="MGI:1098826">
    <property type="gene designation" value="Coq4"/>
</dbReference>
<dbReference type="VEuPathDB" id="HostDB:ENSMUSG00000026798"/>
<dbReference type="eggNOG" id="KOG3244">
    <property type="taxonomic scope" value="Eukaryota"/>
</dbReference>
<dbReference type="GeneTree" id="ENSGT00390000003828"/>
<dbReference type="InParanoid" id="Q8BGB8"/>
<dbReference type="OMA" id="YYERHFH"/>
<dbReference type="OrthoDB" id="4249at2759"/>
<dbReference type="PhylomeDB" id="Q8BGB8"/>
<dbReference type="TreeFam" id="TF314625"/>
<dbReference type="Reactome" id="R-MMU-2142789">
    <property type="pathway name" value="Ubiquinol biosynthesis"/>
</dbReference>
<dbReference type="UniPathway" id="UPA00232"/>
<dbReference type="BioGRID-ORCS" id="227683">
    <property type="hits" value="19 hits in 80 CRISPR screens"/>
</dbReference>
<dbReference type="ChiTaRS" id="Coq4">
    <property type="organism name" value="mouse"/>
</dbReference>
<dbReference type="PRO" id="PR:Q8BGB8"/>
<dbReference type="Proteomes" id="UP000000589">
    <property type="component" value="Chromosome 2"/>
</dbReference>
<dbReference type="RNAct" id="Q8BGB8">
    <property type="molecule type" value="protein"/>
</dbReference>
<dbReference type="Bgee" id="ENSMUSG00000026798">
    <property type="expression patterns" value="Expressed in spermatocyte and 258 other cell types or tissues"/>
</dbReference>
<dbReference type="ExpressionAtlas" id="Q8BGB8">
    <property type="expression patterns" value="baseline and differential"/>
</dbReference>
<dbReference type="GO" id="GO:0031314">
    <property type="term" value="C:extrinsic component of mitochondrial inner membrane"/>
    <property type="evidence" value="ECO:0007669"/>
    <property type="project" value="UniProtKB-UniRule"/>
</dbReference>
<dbReference type="GO" id="GO:0005743">
    <property type="term" value="C:mitochondrial inner membrane"/>
    <property type="evidence" value="ECO:0000266"/>
    <property type="project" value="ComplexPortal"/>
</dbReference>
<dbReference type="GO" id="GO:0005759">
    <property type="term" value="C:mitochondrial matrix"/>
    <property type="evidence" value="ECO:0000266"/>
    <property type="project" value="MGI"/>
</dbReference>
<dbReference type="GO" id="GO:0005739">
    <property type="term" value="C:mitochondrion"/>
    <property type="evidence" value="ECO:0007005"/>
    <property type="project" value="MGI"/>
</dbReference>
<dbReference type="GO" id="GO:0110142">
    <property type="term" value="C:ubiquinone biosynthesis complex"/>
    <property type="evidence" value="ECO:0007669"/>
    <property type="project" value="Ensembl"/>
</dbReference>
<dbReference type="GO" id="GO:0120539">
    <property type="term" value="F:4-hydroxy-3-methoxy-5-polyprenylbenzoate decarboxylase activity"/>
    <property type="evidence" value="ECO:0000250"/>
    <property type="project" value="UniProtKB"/>
</dbReference>
<dbReference type="GO" id="GO:0016831">
    <property type="term" value="F:carboxy-lyase activity"/>
    <property type="evidence" value="ECO:0000266"/>
    <property type="project" value="MGI"/>
</dbReference>
<dbReference type="GO" id="GO:0006744">
    <property type="term" value="P:ubiquinone biosynthetic process"/>
    <property type="evidence" value="ECO:0000250"/>
    <property type="project" value="UniProtKB"/>
</dbReference>
<dbReference type="HAMAP" id="MF_03111">
    <property type="entry name" value="Coq4"/>
    <property type="match status" value="1"/>
</dbReference>
<dbReference type="InterPro" id="IPR007715">
    <property type="entry name" value="Coq4"/>
</dbReference>
<dbReference type="InterPro" id="IPR027540">
    <property type="entry name" value="Coq4_euk"/>
</dbReference>
<dbReference type="PANTHER" id="PTHR12922">
    <property type="entry name" value="UBIQUINONE BIOSYNTHESIS PROTEIN"/>
    <property type="match status" value="1"/>
</dbReference>
<dbReference type="PANTHER" id="PTHR12922:SF7">
    <property type="entry name" value="UBIQUINONE BIOSYNTHESIS PROTEIN COQ4 HOMOLOG, MITOCHONDRIAL"/>
    <property type="match status" value="1"/>
</dbReference>
<dbReference type="Pfam" id="PF05019">
    <property type="entry name" value="Coq4"/>
    <property type="match status" value="1"/>
</dbReference>